<proteinExistence type="evidence at transcript level"/>
<protein>
    <recommendedName>
        <fullName>Glucose-induced degradation protein 8 homolog</fullName>
    </recommendedName>
</protein>
<name>GID8_CHICK</name>
<comment type="function">
    <text evidence="2">Core component of the CTLH E3 ubiquitin-protein ligase complex that selectively accepts ubiquitin from UBE2H and mediates ubiquitination and subsequent proteasomal degradation of the transcription factor HBP1. Acts as a positive regulator of Wnt signaling pathway by promoting beta-catenin (CTNNB1) nuclear accumulation.</text>
</comment>
<comment type="subunit">
    <text evidence="1 2">Homodimer; may also form higher oligomers (By similarity). Identified in the CTLH complex that contains GID4, RANBP9 and/or RANBP10, MKLN1, MAEA, RMND5A (or alternatively its paralog RMND5B), GID8, ARMC8, WDR26 and YPEL5. Within this complex, MAEA, RMND5A (or alternatively its paralog RMND5B), GID8, WDR26, and RANBP9 and/or RANBP10 form the catalytic core, while GID4, MKLN1, ARMC8 and YPEL5 have ancillary roles. Interacts with RANBP9. Part of a complex consisting of RANBP9, MKLN1 and GID8. Interacts with CTNNB1, AXIN1 and GSK3B (By similarity).</text>
</comment>
<comment type="subcellular location">
    <subcellularLocation>
        <location evidence="2">Cytoplasm</location>
    </subcellularLocation>
    <subcellularLocation>
        <location evidence="2">Nucleus</location>
    </subcellularLocation>
    <text evidence="2">Localizes in the cytoplasm in the absence of Wnt stimulation and in the nucleus in the presence of Wnt stimulation.</text>
</comment>
<comment type="similarity">
    <text evidence="5">Belongs to the GID8 family.</text>
</comment>
<reference key="1">
    <citation type="journal article" date="2005" name="Genome Biol.">
        <title>Full-length cDNAs from chicken bursal lymphocytes to facilitate gene function analysis.</title>
        <authorList>
            <person name="Caldwell R.B."/>
            <person name="Kierzek A.M."/>
            <person name="Arakawa H."/>
            <person name="Bezzubov Y."/>
            <person name="Zaim J."/>
            <person name="Fiedler P."/>
            <person name="Kutter S."/>
            <person name="Blagodatski A."/>
            <person name="Kostovska D."/>
            <person name="Koter M."/>
            <person name="Plachy J."/>
            <person name="Carninci P."/>
            <person name="Hayashizaki Y."/>
            <person name="Buerstedde J.-M."/>
        </authorList>
    </citation>
    <scope>NUCLEOTIDE SEQUENCE [LARGE SCALE MRNA]</scope>
    <source>
        <strain>CB</strain>
        <tissue>Bursa of Fabricius</tissue>
    </source>
</reference>
<organism>
    <name type="scientific">Gallus gallus</name>
    <name type="common">Chicken</name>
    <dbReference type="NCBI Taxonomy" id="9031"/>
    <lineage>
        <taxon>Eukaryota</taxon>
        <taxon>Metazoa</taxon>
        <taxon>Chordata</taxon>
        <taxon>Craniata</taxon>
        <taxon>Vertebrata</taxon>
        <taxon>Euteleostomi</taxon>
        <taxon>Archelosauria</taxon>
        <taxon>Archosauria</taxon>
        <taxon>Dinosauria</taxon>
        <taxon>Saurischia</taxon>
        <taxon>Theropoda</taxon>
        <taxon>Coelurosauria</taxon>
        <taxon>Aves</taxon>
        <taxon>Neognathae</taxon>
        <taxon>Galloanserae</taxon>
        <taxon>Galliformes</taxon>
        <taxon>Phasianidae</taxon>
        <taxon>Phasianinae</taxon>
        <taxon>Gallus</taxon>
    </lineage>
</organism>
<feature type="chain" id="PRO_0000328504" description="Glucose-induced degradation protein 8 homolog">
    <location>
        <begin position="1"/>
        <end position="228"/>
    </location>
</feature>
<feature type="domain" description="LisH" evidence="4">
    <location>
        <begin position="25"/>
        <end position="57"/>
    </location>
</feature>
<feature type="domain" description="CTLH" evidence="3">
    <location>
        <begin position="63"/>
        <end position="120"/>
    </location>
</feature>
<evidence type="ECO:0000250" key="1">
    <source>
        <dbReference type="UniProtKB" id="Q9D7M1"/>
    </source>
</evidence>
<evidence type="ECO:0000250" key="2">
    <source>
        <dbReference type="UniProtKB" id="Q9NWU2"/>
    </source>
</evidence>
<evidence type="ECO:0000255" key="3">
    <source>
        <dbReference type="PROSITE-ProRule" id="PRU00058"/>
    </source>
</evidence>
<evidence type="ECO:0000255" key="4">
    <source>
        <dbReference type="PROSITE-ProRule" id="PRU00126"/>
    </source>
</evidence>
<evidence type="ECO:0000305" key="5"/>
<sequence length="228" mass="26815">MSYAEKPDEITKDEWMEKLNNLHIQRADMNRLIMNYLVTEGFKEAAEKFRMESGIEPSVDLETLDERIKIREMILKGQIQEAISLINSLHPELLDTNRYLYFHLQQQHLIELIRQRETEAALEFAQTQLAEQGEESRECLTEMERTLALLAFDNPEESPFGDLLNMMQRQKVWSEVNQAVLDYENRESTPKLAKLLKLLLWAQNELDQKKVKYPKMTDLSKGTIEEPK</sequence>
<gene>
    <name type="primary">GID8</name>
    <name type="ORF">RCJMB04_9k15</name>
</gene>
<keyword id="KW-0963">Cytoplasm</keyword>
<keyword id="KW-0539">Nucleus</keyword>
<keyword id="KW-1185">Reference proteome</keyword>
<keyword id="KW-0879">Wnt signaling pathway</keyword>
<dbReference type="EMBL" id="AJ720027">
    <property type="protein sequence ID" value="CAG31686.1"/>
    <property type="molecule type" value="mRNA"/>
</dbReference>
<dbReference type="RefSeq" id="NP_001007872.1">
    <property type="nucleotide sequence ID" value="NM_001007871.2"/>
</dbReference>
<dbReference type="SMR" id="Q5ZKQ7"/>
<dbReference type="FunCoup" id="Q5ZKQ7">
    <property type="interactions" value="2563"/>
</dbReference>
<dbReference type="STRING" id="9031.ENSGALP00000009130"/>
<dbReference type="PaxDb" id="9031-ENSGALP00000009130"/>
<dbReference type="Ensembl" id="ENSGALT00010058840.1">
    <property type="protein sequence ID" value="ENSGALP00010035805.1"/>
    <property type="gene ID" value="ENSGALG00010024129.1"/>
</dbReference>
<dbReference type="GeneID" id="419235"/>
<dbReference type="KEGG" id="gga:419235"/>
<dbReference type="CTD" id="54994"/>
<dbReference type="VEuPathDB" id="HostDB:geneid_419235"/>
<dbReference type="eggNOG" id="KOG2659">
    <property type="taxonomic scope" value="Eukaryota"/>
</dbReference>
<dbReference type="GeneTree" id="ENSGT00390000015162"/>
<dbReference type="HOGENOM" id="CLU_073203_1_0_1"/>
<dbReference type="InParanoid" id="Q5ZKQ7"/>
<dbReference type="OMA" id="KMILWAQ"/>
<dbReference type="OrthoDB" id="2415936at2759"/>
<dbReference type="PhylomeDB" id="Q5ZKQ7"/>
<dbReference type="TreeFam" id="TF300176"/>
<dbReference type="Reactome" id="R-GGA-9861718">
    <property type="pathway name" value="Regulation of pyruvate metabolism"/>
</dbReference>
<dbReference type="PRO" id="PR:Q5ZKQ7"/>
<dbReference type="Proteomes" id="UP000000539">
    <property type="component" value="Chromosome 20"/>
</dbReference>
<dbReference type="Bgee" id="ENSGALG00000005700">
    <property type="expression patterns" value="Expressed in spermatocyte and 12 other cell types or tissues"/>
</dbReference>
<dbReference type="GO" id="GO:0030054">
    <property type="term" value="C:cell junction"/>
    <property type="evidence" value="ECO:0007669"/>
    <property type="project" value="Ensembl"/>
</dbReference>
<dbReference type="GO" id="GO:0005737">
    <property type="term" value="C:cytoplasm"/>
    <property type="evidence" value="ECO:0000318"/>
    <property type="project" value="GO_Central"/>
</dbReference>
<dbReference type="GO" id="GO:0005829">
    <property type="term" value="C:cytosol"/>
    <property type="evidence" value="ECO:0000250"/>
    <property type="project" value="UniProtKB"/>
</dbReference>
<dbReference type="GO" id="GO:0005654">
    <property type="term" value="C:nucleoplasm"/>
    <property type="evidence" value="ECO:0007669"/>
    <property type="project" value="Ensembl"/>
</dbReference>
<dbReference type="GO" id="GO:0005634">
    <property type="term" value="C:nucleus"/>
    <property type="evidence" value="ECO:0000250"/>
    <property type="project" value="UniProtKB"/>
</dbReference>
<dbReference type="GO" id="GO:0000151">
    <property type="term" value="C:ubiquitin ligase complex"/>
    <property type="evidence" value="ECO:0007669"/>
    <property type="project" value="Ensembl"/>
</dbReference>
<dbReference type="GO" id="GO:0042803">
    <property type="term" value="F:protein homodimerization activity"/>
    <property type="evidence" value="ECO:0007669"/>
    <property type="project" value="Ensembl"/>
</dbReference>
<dbReference type="GO" id="GO:0090263">
    <property type="term" value="P:positive regulation of canonical Wnt signaling pathway"/>
    <property type="evidence" value="ECO:0000250"/>
    <property type="project" value="UniProtKB"/>
</dbReference>
<dbReference type="GO" id="GO:0008284">
    <property type="term" value="P:positive regulation of cell population proliferation"/>
    <property type="evidence" value="ECO:0000250"/>
    <property type="project" value="UniProtKB"/>
</dbReference>
<dbReference type="GO" id="GO:0043161">
    <property type="term" value="P:proteasome-mediated ubiquitin-dependent protein catabolic process"/>
    <property type="evidence" value="ECO:0000318"/>
    <property type="project" value="GO_Central"/>
</dbReference>
<dbReference type="GO" id="GO:0016055">
    <property type="term" value="P:Wnt signaling pathway"/>
    <property type="evidence" value="ECO:0007669"/>
    <property type="project" value="UniProtKB-KW"/>
</dbReference>
<dbReference type="InterPro" id="IPR013144">
    <property type="entry name" value="CRA_dom"/>
</dbReference>
<dbReference type="InterPro" id="IPR024964">
    <property type="entry name" value="CTLH/CRA"/>
</dbReference>
<dbReference type="InterPro" id="IPR006595">
    <property type="entry name" value="CTLH_C"/>
</dbReference>
<dbReference type="InterPro" id="IPR006594">
    <property type="entry name" value="LisH"/>
</dbReference>
<dbReference type="InterPro" id="IPR050618">
    <property type="entry name" value="Ubq-SigPath_Reg"/>
</dbReference>
<dbReference type="PANTHER" id="PTHR12864">
    <property type="entry name" value="RAN BINDING PROTEIN 9-RELATED"/>
    <property type="match status" value="1"/>
</dbReference>
<dbReference type="Pfam" id="PF10607">
    <property type="entry name" value="CTLH"/>
    <property type="match status" value="1"/>
</dbReference>
<dbReference type="Pfam" id="PF08513">
    <property type="entry name" value="LisH"/>
    <property type="match status" value="1"/>
</dbReference>
<dbReference type="SMART" id="SM00757">
    <property type="entry name" value="CRA"/>
    <property type="match status" value="1"/>
</dbReference>
<dbReference type="SMART" id="SM00668">
    <property type="entry name" value="CTLH"/>
    <property type="match status" value="1"/>
</dbReference>
<dbReference type="SMART" id="SM00667">
    <property type="entry name" value="LisH"/>
    <property type="match status" value="1"/>
</dbReference>
<dbReference type="PROSITE" id="PS50897">
    <property type="entry name" value="CTLH"/>
    <property type="match status" value="1"/>
</dbReference>
<dbReference type="PROSITE" id="PS50896">
    <property type="entry name" value="LISH"/>
    <property type="match status" value="1"/>
</dbReference>
<accession>Q5ZKQ7</accession>